<name>RN181_DROME</name>
<reference key="1">
    <citation type="journal article" date="2000" name="Science">
        <title>The genome sequence of Drosophila melanogaster.</title>
        <authorList>
            <person name="Adams M.D."/>
            <person name="Celniker S.E."/>
            <person name="Holt R.A."/>
            <person name="Evans C.A."/>
            <person name="Gocayne J.D."/>
            <person name="Amanatides P.G."/>
            <person name="Scherer S.E."/>
            <person name="Li P.W."/>
            <person name="Hoskins R.A."/>
            <person name="Galle R.F."/>
            <person name="George R.A."/>
            <person name="Lewis S.E."/>
            <person name="Richards S."/>
            <person name="Ashburner M."/>
            <person name="Henderson S.N."/>
            <person name="Sutton G.G."/>
            <person name="Wortman J.R."/>
            <person name="Yandell M.D."/>
            <person name="Zhang Q."/>
            <person name="Chen L.X."/>
            <person name="Brandon R.C."/>
            <person name="Rogers Y.-H.C."/>
            <person name="Blazej R.G."/>
            <person name="Champe M."/>
            <person name="Pfeiffer B.D."/>
            <person name="Wan K.H."/>
            <person name="Doyle C."/>
            <person name="Baxter E.G."/>
            <person name="Helt G."/>
            <person name="Nelson C.R."/>
            <person name="Miklos G.L.G."/>
            <person name="Abril J.F."/>
            <person name="Agbayani A."/>
            <person name="An H.-J."/>
            <person name="Andrews-Pfannkoch C."/>
            <person name="Baldwin D."/>
            <person name="Ballew R.M."/>
            <person name="Basu A."/>
            <person name="Baxendale J."/>
            <person name="Bayraktaroglu L."/>
            <person name="Beasley E.M."/>
            <person name="Beeson K.Y."/>
            <person name="Benos P.V."/>
            <person name="Berman B.P."/>
            <person name="Bhandari D."/>
            <person name="Bolshakov S."/>
            <person name="Borkova D."/>
            <person name="Botchan M.R."/>
            <person name="Bouck J."/>
            <person name="Brokstein P."/>
            <person name="Brottier P."/>
            <person name="Burtis K.C."/>
            <person name="Busam D.A."/>
            <person name="Butler H."/>
            <person name="Cadieu E."/>
            <person name="Center A."/>
            <person name="Chandra I."/>
            <person name="Cherry J.M."/>
            <person name="Cawley S."/>
            <person name="Dahlke C."/>
            <person name="Davenport L.B."/>
            <person name="Davies P."/>
            <person name="de Pablos B."/>
            <person name="Delcher A."/>
            <person name="Deng Z."/>
            <person name="Mays A.D."/>
            <person name="Dew I."/>
            <person name="Dietz S.M."/>
            <person name="Dodson K."/>
            <person name="Doup L.E."/>
            <person name="Downes M."/>
            <person name="Dugan-Rocha S."/>
            <person name="Dunkov B.C."/>
            <person name="Dunn P."/>
            <person name="Durbin K.J."/>
            <person name="Evangelista C.C."/>
            <person name="Ferraz C."/>
            <person name="Ferriera S."/>
            <person name="Fleischmann W."/>
            <person name="Fosler C."/>
            <person name="Gabrielian A.E."/>
            <person name="Garg N.S."/>
            <person name="Gelbart W.M."/>
            <person name="Glasser K."/>
            <person name="Glodek A."/>
            <person name="Gong F."/>
            <person name="Gorrell J.H."/>
            <person name="Gu Z."/>
            <person name="Guan P."/>
            <person name="Harris M."/>
            <person name="Harris N.L."/>
            <person name="Harvey D.A."/>
            <person name="Heiman T.J."/>
            <person name="Hernandez J.R."/>
            <person name="Houck J."/>
            <person name="Hostin D."/>
            <person name="Houston K.A."/>
            <person name="Howland T.J."/>
            <person name="Wei M.-H."/>
            <person name="Ibegwam C."/>
            <person name="Jalali M."/>
            <person name="Kalush F."/>
            <person name="Karpen G.H."/>
            <person name="Ke Z."/>
            <person name="Kennison J.A."/>
            <person name="Ketchum K.A."/>
            <person name="Kimmel B.E."/>
            <person name="Kodira C.D."/>
            <person name="Kraft C.L."/>
            <person name="Kravitz S."/>
            <person name="Kulp D."/>
            <person name="Lai Z."/>
            <person name="Lasko P."/>
            <person name="Lei Y."/>
            <person name="Levitsky A.A."/>
            <person name="Li J.H."/>
            <person name="Li Z."/>
            <person name="Liang Y."/>
            <person name="Lin X."/>
            <person name="Liu X."/>
            <person name="Mattei B."/>
            <person name="McIntosh T.C."/>
            <person name="McLeod M.P."/>
            <person name="McPherson D."/>
            <person name="Merkulov G."/>
            <person name="Milshina N.V."/>
            <person name="Mobarry C."/>
            <person name="Morris J."/>
            <person name="Moshrefi A."/>
            <person name="Mount S.M."/>
            <person name="Moy M."/>
            <person name="Murphy B."/>
            <person name="Murphy L."/>
            <person name="Muzny D.M."/>
            <person name="Nelson D.L."/>
            <person name="Nelson D.R."/>
            <person name="Nelson K.A."/>
            <person name="Nixon K."/>
            <person name="Nusskern D.R."/>
            <person name="Pacleb J.M."/>
            <person name="Palazzolo M."/>
            <person name="Pittman G.S."/>
            <person name="Pan S."/>
            <person name="Pollard J."/>
            <person name="Puri V."/>
            <person name="Reese M.G."/>
            <person name="Reinert K."/>
            <person name="Remington K."/>
            <person name="Saunders R.D.C."/>
            <person name="Scheeler F."/>
            <person name="Shen H."/>
            <person name="Shue B.C."/>
            <person name="Siden-Kiamos I."/>
            <person name="Simpson M."/>
            <person name="Skupski M.P."/>
            <person name="Smith T.J."/>
            <person name="Spier E."/>
            <person name="Spradling A.C."/>
            <person name="Stapleton M."/>
            <person name="Strong R."/>
            <person name="Sun E."/>
            <person name="Svirskas R."/>
            <person name="Tector C."/>
            <person name="Turner R."/>
            <person name="Venter E."/>
            <person name="Wang A.H."/>
            <person name="Wang X."/>
            <person name="Wang Z.-Y."/>
            <person name="Wassarman D.A."/>
            <person name="Weinstock G.M."/>
            <person name="Weissenbach J."/>
            <person name="Williams S.M."/>
            <person name="Woodage T."/>
            <person name="Worley K.C."/>
            <person name="Wu D."/>
            <person name="Yang S."/>
            <person name="Yao Q.A."/>
            <person name="Ye J."/>
            <person name="Yeh R.-F."/>
            <person name="Zaveri J.S."/>
            <person name="Zhan M."/>
            <person name="Zhang G."/>
            <person name="Zhao Q."/>
            <person name="Zheng L."/>
            <person name="Zheng X.H."/>
            <person name="Zhong F.N."/>
            <person name="Zhong W."/>
            <person name="Zhou X."/>
            <person name="Zhu S.C."/>
            <person name="Zhu X."/>
            <person name="Smith H.O."/>
            <person name="Gibbs R.A."/>
            <person name="Myers E.W."/>
            <person name="Rubin G.M."/>
            <person name="Venter J.C."/>
        </authorList>
    </citation>
    <scope>NUCLEOTIDE SEQUENCE [LARGE SCALE GENOMIC DNA]</scope>
    <source>
        <strain>Berkeley</strain>
    </source>
</reference>
<reference key="2">
    <citation type="journal article" date="2002" name="Genome Biol.">
        <title>Annotation of the Drosophila melanogaster euchromatic genome: a systematic review.</title>
        <authorList>
            <person name="Misra S."/>
            <person name="Crosby M.A."/>
            <person name="Mungall C.J."/>
            <person name="Matthews B.B."/>
            <person name="Campbell K.S."/>
            <person name="Hradecky P."/>
            <person name="Huang Y."/>
            <person name="Kaminker J.S."/>
            <person name="Millburn G.H."/>
            <person name="Prochnik S.E."/>
            <person name="Smith C.D."/>
            <person name="Tupy J.L."/>
            <person name="Whitfield E.J."/>
            <person name="Bayraktaroglu L."/>
            <person name="Berman B.P."/>
            <person name="Bettencourt B.R."/>
            <person name="Celniker S.E."/>
            <person name="de Grey A.D.N.J."/>
            <person name="Drysdale R.A."/>
            <person name="Harris N.L."/>
            <person name="Richter J."/>
            <person name="Russo S."/>
            <person name="Schroeder A.J."/>
            <person name="Shu S.Q."/>
            <person name="Stapleton M."/>
            <person name="Yamada C."/>
            <person name="Ashburner M."/>
            <person name="Gelbart W.M."/>
            <person name="Rubin G.M."/>
            <person name="Lewis S.E."/>
        </authorList>
    </citation>
    <scope>GENOME REANNOTATION</scope>
    <source>
        <strain>Berkeley</strain>
    </source>
</reference>
<reference key="3">
    <citation type="journal article" date="2002" name="Genome Biol.">
        <title>A Drosophila full-length cDNA resource.</title>
        <authorList>
            <person name="Stapleton M."/>
            <person name="Carlson J.W."/>
            <person name="Brokstein P."/>
            <person name="Yu C."/>
            <person name="Champe M."/>
            <person name="George R.A."/>
            <person name="Guarin H."/>
            <person name="Kronmiller B."/>
            <person name="Pacleb J.M."/>
            <person name="Park S."/>
            <person name="Wan K.H."/>
            <person name="Rubin G.M."/>
            <person name="Celniker S.E."/>
        </authorList>
    </citation>
    <scope>NUCLEOTIDE SEQUENCE [LARGE SCALE MRNA]</scope>
    <source>
        <strain>Berkeley</strain>
        <tissue>Larva</tissue>
        <tissue>Pupae</tissue>
    </source>
</reference>
<sequence length="147" mass="17037">MSDYFEELGHEPTGPLGANDLARNLKRLQVLAIMNGIDMEIEVPEASKRAILELPVHEIVKSDEGGDLECSVCKEPAEEGQKYRILPCKHEFHEECILLWLKKTNSCPLCRYELETDDPVYEELRRFRQDEANRRERENTLLDSMFG</sequence>
<evidence type="ECO:0000250" key="1">
    <source>
        <dbReference type="UniProtKB" id="Q9P0P0"/>
    </source>
</evidence>
<evidence type="ECO:0000255" key="2">
    <source>
        <dbReference type="PROSITE-ProRule" id="PRU00175"/>
    </source>
</evidence>
<evidence type="ECO:0000305" key="3"/>
<feature type="chain" id="PRO_0000295702" description="E3 ubiquitin-protein ligase RNF181 homolog">
    <location>
        <begin position="1"/>
        <end position="147"/>
    </location>
</feature>
<feature type="zinc finger region" description="RING-type; atypical" evidence="2">
    <location>
        <begin position="70"/>
        <end position="111"/>
    </location>
</feature>
<gene>
    <name type="ORF">CG7694</name>
</gene>
<accession>Q9VE61</accession>
<accession>B7Z0M4</accession>
<accession>Q8IGZ5</accession>
<dbReference type="EC" id="2.3.2.27"/>
<dbReference type="EMBL" id="AE014297">
    <property type="protein sequence ID" value="AAF55568.1"/>
    <property type="molecule type" value="Genomic_DNA"/>
</dbReference>
<dbReference type="EMBL" id="AE014297">
    <property type="protein sequence ID" value="ACL83534.1"/>
    <property type="molecule type" value="Genomic_DNA"/>
</dbReference>
<dbReference type="EMBL" id="BT001518">
    <property type="protein sequence ID" value="AAN71273.1"/>
    <property type="status" value="ALT_INIT"/>
    <property type="molecule type" value="mRNA"/>
</dbReference>
<dbReference type="RefSeq" id="NP_001138076.1">
    <property type="nucleotide sequence ID" value="NM_001144604.1"/>
</dbReference>
<dbReference type="RefSeq" id="NP_001287394.1">
    <property type="nucleotide sequence ID" value="NM_001300465.1"/>
</dbReference>
<dbReference type="RefSeq" id="NP_650729.1">
    <property type="nucleotide sequence ID" value="NM_142472.4"/>
</dbReference>
<dbReference type="SMR" id="Q9VE61"/>
<dbReference type="BioGRID" id="67239">
    <property type="interactions" value="1"/>
</dbReference>
<dbReference type="FunCoup" id="Q9VE61">
    <property type="interactions" value="355"/>
</dbReference>
<dbReference type="IntAct" id="Q9VE61">
    <property type="interactions" value="1"/>
</dbReference>
<dbReference type="STRING" id="7227.FBpp0083052"/>
<dbReference type="PaxDb" id="7227-FBpp0083052"/>
<dbReference type="DNASU" id="42230"/>
<dbReference type="EnsemblMetazoa" id="FBtr0083632">
    <property type="protein sequence ID" value="FBpp0083052"/>
    <property type="gene ID" value="FBgn0038627"/>
</dbReference>
<dbReference type="EnsemblMetazoa" id="FBtr0290211">
    <property type="protein sequence ID" value="FBpp0288650"/>
    <property type="gene ID" value="FBgn0038627"/>
</dbReference>
<dbReference type="EnsemblMetazoa" id="FBtr0344291">
    <property type="protein sequence ID" value="FBpp0310695"/>
    <property type="gene ID" value="FBgn0038627"/>
</dbReference>
<dbReference type="GeneID" id="42230"/>
<dbReference type="KEGG" id="dme:Dmel_CG7694"/>
<dbReference type="UCSC" id="CG7694-RA">
    <property type="organism name" value="d. melanogaster"/>
</dbReference>
<dbReference type="AGR" id="FB:FBgn0038627"/>
<dbReference type="FlyBase" id="FBgn0038627">
    <property type="gene designation" value="CG7694"/>
</dbReference>
<dbReference type="VEuPathDB" id="VectorBase:FBgn0038627"/>
<dbReference type="eggNOG" id="KOG0800">
    <property type="taxonomic scope" value="Eukaryota"/>
</dbReference>
<dbReference type="GeneTree" id="ENSGT00940000160552"/>
<dbReference type="HOGENOM" id="CLU_144247_0_0_1"/>
<dbReference type="InParanoid" id="Q9VE61"/>
<dbReference type="OMA" id="KKANSCP"/>
<dbReference type="OrthoDB" id="21204at2759"/>
<dbReference type="PhylomeDB" id="Q9VE61"/>
<dbReference type="UniPathway" id="UPA00143"/>
<dbReference type="BioGRID-ORCS" id="42230">
    <property type="hits" value="0 hits in 1 CRISPR screen"/>
</dbReference>
<dbReference type="GenomeRNAi" id="42230"/>
<dbReference type="PRO" id="PR:Q9VE61"/>
<dbReference type="Proteomes" id="UP000000803">
    <property type="component" value="Chromosome 3R"/>
</dbReference>
<dbReference type="Bgee" id="FBgn0038627">
    <property type="expression patterns" value="Expressed in early elongation stage spermatid (Drosophila) in testis and 80 other cell types or tissues"/>
</dbReference>
<dbReference type="ExpressionAtlas" id="Q9VE61">
    <property type="expression patterns" value="baseline and differential"/>
</dbReference>
<dbReference type="GO" id="GO:0005737">
    <property type="term" value="C:cytoplasm"/>
    <property type="evidence" value="ECO:0000318"/>
    <property type="project" value="GO_Central"/>
</dbReference>
<dbReference type="GO" id="GO:0061630">
    <property type="term" value="F:ubiquitin protein ligase activity"/>
    <property type="evidence" value="ECO:0000318"/>
    <property type="project" value="GO_Central"/>
</dbReference>
<dbReference type="GO" id="GO:0004842">
    <property type="term" value="F:ubiquitin-protein transferase activity"/>
    <property type="evidence" value="ECO:0000250"/>
    <property type="project" value="FlyBase"/>
</dbReference>
<dbReference type="GO" id="GO:0008270">
    <property type="term" value="F:zinc ion binding"/>
    <property type="evidence" value="ECO:0000255"/>
    <property type="project" value="FlyBase"/>
</dbReference>
<dbReference type="GO" id="GO:0051865">
    <property type="term" value="P:protein autoubiquitination"/>
    <property type="evidence" value="ECO:0000250"/>
    <property type="project" value="FlyBase"/>
</dbReference>
<dbReference type="GO" id="GO:0016567">
    <property type="term" value="P:protein ubiquitination"/>
    <property type="evidence" value="ECO:0000318"/>
    <property type="project" value="GO_Central"/>
</dbReference>
<dbReference type="CDD" id="cd16669">
    <property type="entry name" value="RING-H2_RNF181"/>
    <property type="match status" value="1"/>
</dbReference>
<dbReference type="FunFam" id="3.30.40.10:FF:000127">
    <property type="entry name" value="E3 ubiquitin-protein ligase RNF181"/>
    <property type="match status" value="1"/>
</dbReference>
<dbReference type="Gene3D" id="3.30.40.10">
    <property type="entry name" value="Zinc/RING finger domain, C3HC4 (zinc finger)"/>
    <property type="match status" value="1"/>
</dbReference>
<dbReference type="InterPro" id="IPR051834">
    <property type="entry name" value="RING_finger_E3_ligase"/>
</dbReference>
<dbReference type="InterPro" id="IPR001841">
    <property type="entry name" value="Znf_RING"/>
</dbReference>
<dbReference type="InterPro" id="IPR013083">
    <property type="entry name" value="Znf_RING/FYVE/PHD"/>
</dbReference>
<dbReference type="PANTHER" id="PTHR45931:SF3">
    <property type="entry name" value="RING ZINC FINGER-CONTAINING PROTEIN"/>
    <property type="match status" value="1"/>
</dbReference>
<dbReference type="PANTHER" id="PTHR45931">
    <property type="entry name" value="SI:CH211-59O9.10"/>
    <property type="match status" value="1"/>
</dbReference>
<dbReference type="Pfam" id="PF13639">
    <property type="entry name" value="zf-RING_2"/>
    <property type="match status" value="1"/>
</dbReference>
<dbReference type="SMART" id="SM00184">
    <property type="entry name" value="RING"/>
    <property type="match status" value="1"/>
</dbReference>
<dbReference type="SUPFAM" id="SSF57850">
    <property type="entry name" value="RING/U-box"/>
    <property type="match status" value="1"/>
</dbReference>
<dbReference type="PROSITE" id="PS50089">
    <property type="entry name" value="ZF_RING_2"/>
    <property type="match status" value="1"/>
</dbReference>
<comment type="function">
    <text evidence="1">E3 ubiquitin-protein ligase which accepts ubiquitin from an E2 ubiquitin-conjugating enzyme in the form of a thioester and then directly transfers the ubiquitin to targeted substrates.</text>
</comment>
<comment type="catalytic activity">
    <reaction>
        <text>S-ubiquitinyl-[E2 ubiquitin-conjugating enzyme]-L-cysteine + [acceptor protein]-L-lysine = [E2 ubiquitin-conjugating enzyme]-L-cysteine + N(6)-ubiquitinyl-[acceptor protein]-L-lysine.</text>
        <dbReference type="EC" id="2.3.2.27"/>
    </reaction>
</comment>
<comment type="pathway">
    <text>Protein modification; protein ubiquitination.</text>
</comment>
<comment type="similarity">
    <text evidence="3">Belongs to the RNF181 family.</text>
</comment>
<comment type="sequence caution" evidence="3">
    <conflict type="erroneous initiation">
        <sequence resource="EMBL-CDS" id="AAN71273"/>
    </conflict>
</comment>
<keyword id="KW-0479">Metal-binding</keyword>
<keyword id="KW-1185">Reference proteome</keyword>
<keyword id="KW-0808">Transferase</keyword>
<keyword id="KW-0833">Ubl conjugation pathway</keyword>
<keyword id="KW-0862">Zinc</keyword>
<keyword id="KW-0863">Zinc-finger</keyword>
<protein>
    <recommendedName>
        <fullName>E3 ubiquitin-protein ligase RNF181 homolog</fullName>
        <ecNumber>2.3.2.27</ecNumber>
    </recommendedName>
    <alternativeName>
        <fullName>RING finger protein 181 homolog</fullName>
    </alternativeName>
    <alternativeName>
        <fullName evidence="3">RING-type E3 ubiquitin transferase RNF181 homolog</fullName>
    </alternativeName>
</protein>
<proteinExistence type="evidence at transcript level"/>
<organism>
    <name type="scientific">Drosophila melanogaster</name>
    <name type="common">Fruit fly</name>
    <dbReference type="NCBI Taxonomy" id="7227"/>
    <lineage>
        <taxon>Eukaryota</taxon>
        <taxon>Metazoa</taxon>
        <taxon>Ecdysozoa</taxon>
        <taxon>Arthropoda</taxon>
        <taxon>Hexapoda</taxon>
        <taxon>Insecta</taxon>
        <taxon>Pterygota</taxon>
        <taxon>Neoptera</taxon>
        <taxon>Endopterygota</taxon>
        <taxon>Diptera</taxon>
        <taxon>Brachycera</taxon>
        <taxon>Muscomorpha</taxon>
        <taxon>Ephydroidea</taxon>
        <taxon>Drosophilidae</taxon>
        <taxon>Drosophila</taxon>
        <taxon>Sophophora</taxon>
    </lineage>
</organism>